<sequence>MLQQDSNDDTEDVSLFDAEEETTNRPRKAKIRHPVASFFHLFFRVSAIIVYLLCELLSSSFITCMVTIILLLSCDFWAVKNVTGRLMVGLRWWNHIDEDGKSHWVFESRKESSQENKTVSEAESRIFWLGLIACPVLWVIFAFSALFSFRVKWLAVVIMGVVLQGANLYGYIRCKVGSRKNLTSMATSYFGKQFLRQNTGDDQTS</sequence>
<dbReference type="EMBL" id="CR859404">
    <property type="protein sequence ID" value="CAH91576.1"/>
    <property type="molecule type" value="mRNA"/>
</dbReference>
<dbReference type="RefSeq" id="NP_001127435.1">
    <property type="nucleotide sequence ID" value="NM_001133963.1"/>
</dbReference>
<dbReference type="FunCoup" id="Q5R9I4">
    <property type="interactions" value="2052"/>
</dbReference>
<dbReference type="Ensembl" id="ENSPPYT00000041624.1">
    <property type="protein sequence ID" value="ENSPPYP00000031530.1"/>
    <property type="gene ID" value="ENSPPYG00000008005.3"/>
</dbReference>
<dbReference type="GeneID" id="100174506"/>
<dbReference type="KEGG" id="pon:100174506"/>
<dbReference type="CTD" id="201158"/>
<dbReference type="GeneTree" id="ENSGT00390000004428"/>
<dbReference type="InParanoid" id="Q5R9I4"/>
<dbReference type="OrthoDB" id="2151161at2759"/>
<dbReference type="Proteomes" id="UP000001595">
    <property type="component" value="Chromosome 17"/>
</dbReference>
<dbReference type="GO" id="GO:0000139">
    <property type="term" value="C:Golgi membrane"/>
    <property type="evidence" value="ECO:0007669"/>
    <property type="project" value="TreeGrafter"/>
</dbReference>
<dbReference type="GO" id="GO:0009306">
    <property type="term" value="P:protein secretion"/>
    <property type="evidence" value="ECO:0007669"/>
    <property type="project" value="TreeGrafter"/>
</dbReference>
<dbReference type="GO" id="GO:0016192">
    <property type="term" value="P:vesicle-mediated transport"/>
    <property type="evidence" value="ECO:0007669"/>
    <property type="project" value="TreeGrafter"/>
</dbReference>
<dbReference type="InterPro" id="IPR008564">
    <property type="entry name" value="TVP23-like"/>
</dbReference>
<dbReference type="PANTHER" id="PTHR13019">
    <property type="entry name" value="GOLGI APPARATUS MEMBRANE PROTEIN TVP23"/>
    <property type="match status" value="1"/>
</dbReference>
<dbReference type="PANTHER" id="PTHR13019:SF9">
    <property type="entry name" value="GOLGI APPARATUS MEMBRANE PROTEIN TVP23 HOMOLOG B"/>
    <property type="match status" value="1"/>
</dbReference>
<dbReference type="Pfam" id="PF05832">
    <property type="entry name" value="DUF846"/>
    <property type="match status" value="1"/>
</dbReference>
<proteinExistence type="evidence at transcript level"/>
<gene>
    <name type="primary">TVP23B</name>
    <name type="synonym">FAM18B</name>
    <name type="synonym">FAM18B1</name>
</gene>
<reference key="1">
    <citation type="submission" date="2004-11" db="EMBL/GenBank/DDBJ databases">
        <authorList>
            <consortium name="The German cDNA consortium"/>
        </authorList>
    </citation>
    <scope>NUCLEOTIDE SEQUENCE [LARGE SCALE MRNA]</scope>
    <source>
        <tissue>Heart</tissue>
    </source>
</reference>
<evidence type="ECO:0000250" key="1">
    <source>
        <dbReference type="UniProtKB" id="Q9NYZ1"/>
    </source>
</evidence>
<evidence type="ECO:0000255" key="2"/>
<evidence type="ECO:0000256" key="3">
    <source>
        <dbReference type="SAM" id="MobiDB-lite"/>
    </source>
</evidence>
<evidence type="ECO:0000305" key="4"/>
<comment type="subcellular location">
    <subcellularLocation>
        <location evidence="4">Membrane</location>
        <topology evidence="4">Multi-pass membrane protein</topology>
    </subcellularLocation>
</comment>
<comment type="similarity">
    <text evidence="4">Belongs to the TVP23 family.</text>
</comment>
<keyword id="KW-0007">Acetylation</keyword>
<keyword id="KW-0472">Membrane</keyword>
<keyword id="KW-1185">Reference proteome</keyword>
<keyword id="KW-0812">Transmembrane</keyword>
<keyword id="KW-1133">Transmembrane helix</keyword>
<feature type="chain" id="PRO_0000212830" description="Golgi apparatus membrane protein TVP23 homolog B">
    <location>
        <begin position="1"/>
        <end position="205"/>
    </location>
</feature>
<feature type="transmembrane region" description="Helical" evidence="2">
    <location>
        <begin position="34"/>
        <end position="53"/>
    </location>
</feature>
<feature type="transmembrane region" description="Helical" evidence="2">
    <location>
        <begin position="54"/>
        <end position="72"/>
    </location>
</feature>
<feature type="transmembrane region" description="Helical" evidence="2">
    <location>
        <begin position="126"/>
        <end position="146"/>
    </location>
</feature>
<feature type="transmembrane region" description="Helical" evidence="2">
    <location>
        <begin position="152"/>
        <end position="172"/>
    </location>
</feature>
<feature type="region of interest" description="Disordered" evidence="3">
    <location>
        <begin position="1"/>
        <end position="21"/>
    </location>
</feature>
<feature type="modified residue" description="N-acetylmethionine" evidence="1">
    <location>
        <position position="1"/>
    </location>
</feature>
<accession>Q5R9I4</accession>
<name>TV23B_PONAB</name>
<protein>
    <recommendedName>
        <fullName>Golgi apparatus membrane protein TVP23 homolog B</fullName>
    </recommendedName>
</protein>
<organism>
    <name type="scientific">Pongo abelii</name>
    <name type="common">Sumatran orangutan</name>
    <name type="synonym">Pongo pygmaeus abelii</name>
    <dbReference type="NCBI Taxonomy" id="9601"/>
    <lineage>
        <taxon>Eukaryota</taxon>
        <taxon>Metazoa</taxon>
        <taxon>Chordata</taxon>
        <taxon>Craniata</taxon>
        <taxon>Vertebrata</taxon>
        <taxon>Euteleostomi</taxon>
        <taxon>Mammalia</taxon>
        <taxon>Eutheria</taxon>
        <taxon>Euarchontoglires</taxon>
        <taxon>Primates</taxon>
        <taxon>Haplorrhini</taxon>
        <taxon>Catarrhini</taxon>
        <taxon>Hominidae</taxon>
        <taxon>Pongo</taxon>
    </lineage>
</organism>